<reference key="1">
    <citation type="journal article" date="2011" name="MBio">
        <title>Novel metabolic attributes of the genus Cyanothece, comprising a group of unicellular nitrogen-fixing Cyanobacteria.</title>
        <authorList>
            <person name="Bandyopadhyay A."/>
            <person name="Elvitigala T."/>
            <person name="Welsh E."/>
            <person name="Stockel J."/>
            <person name="Liberton M."/>
            <person name="Min H."/>
            <person name="Sherman L.A."/>
            <person name="Pakrasi H.B."/>
        </authorList>
    </citation>
    <scope>NUCLEOTIDE SEQUENCE [LARGE SCALE GENOMIC DNA]</scope>
    <source>
        <strain>PCC 7424</strain>
    </source>
</reference>
<feature type="chain" id="PRO_1000143674" description="NAD(P)H-quinone oxidoreductase subunit N">
    <location>
        <begin position="1"/>
        <end position="158"/>
    </location>
</feature>
<name>NDHN_GLOC7</name>
<proteinExistence type="inferred from homology"/>
<gene>
    <name evidence="1" type="primary">ndhN</name>
    <name type="ordered locus">PCC7424_4906</name>
</gene>
<sequence>MPLLTTGKSFIRALEKSGALGVYVPLEGGFEGRYQRRLRANGYTPYNLTARGLGDLSSYLTGIHGVRPPHLGKKNIGQDAAVGPVYFVPPIATYQLETLPPKSKGLVLWIIEGMILSRAEIEYLTYLPQQEPRLKIVVEMGGERYFRWQPLEQSIQAA</sequence>
<accession>B7KEE5</accession>
<protein>
    <recommendedName>
        <fullName evidence="1">NAD(P)H-quinone oxidoreductase subunit N</fullName>
        <ecNumber evidence="1">7.1.1.-</ecNumber>
    </recommendedName>
    <alternativeName>
        <fullName evidence="1">NAD(P)H dehydrogenase I subunit N</fullName>
        <shortName evidence="1">NDH-1 subunit N</shortName>
        <shortName evidence="1">NDH-N</shortName>
    </alternativeName>
</protein>
<comment type="function">
    <text evidence="1">NDH-1 shuttles electrons from an unknown electron donor, via FMN and iron-sulfur (Fe-S) centers, to quinones in the respiratory and/or the photosynthetic chain. The immediate electron acceptor for the enzyme in this species is believed to be plastoquinone. Couples the redox reaction to proton translocation, and thus conserves the redox energy in a proton gradient. Cyanobacterial NDH-1 also plays a role in inorganic carbon-concentration.</text>
</comment>
<comment type="catalytic activity">
    <reaction evidence="1">
        <text>a plastoquinone + NADH + (n+1) H(+)(in) = a plastoquinol + NAD(+) + n H(+)(out)</text>
        <dbReference type="Rhea" id="RHEA:42608"/>
        <dbReference type="Rhea" id="RHEA-COMP:9561"/>
        <dbReference type="Rhea" id="RHEA-COMP:9562"/>
        <dbReference type="ChEBI" id="CHEBI:15378"/>
        <dbReference type="ChEBI" id="CHEBI:17757"/>
        <dbReference type="ChEBI" id="CHEBI:57540"/>
        <dbReference type="ChEBI" id="CHEBI:57945"/>
        <dbReference type="ChEBI" id="CHEBI:62192"/>
    </reaction>
</comment>
<comment type="catalytic activity">
    <reaction evidence="1">
        <text>a plastoquinone + NADPH + (n+1) H(+)(in) = a plastoquinol + NADP(+) + n H(+)(out)</text>
        <dbReference type="Rhea" id="RHEA:42612"/>
        <dbReference type="Rhea" id="RHEA-COMP:9561"/>
        <dbReference type="Rhea" id="RHEA-COMP:9562"/>
        <dbReference type="ChEBI" id="CHEBI:15378"/>
        <dbReference type="ChEBI" id="CHEBI:17757"/>
        <dbReference type="ChEBI" id="CHEBI:57783"/>
        <dbReference type="ChEBI" id="CHEBI:58349"/>
        <dbReference type="ChEBI" id="CHEBI:62192"/>
    </reaction>
</comment>
<comment type="subunit">
    <text evidence="1">NDH-1 can be composed of about 15 different subunits; different subcomplexes with different compositions have been identified which probably have different functions.</text>
</comment>
<comment type="subcellular location">
    <subcellularLocation>
        <location evidence="1">Cellular thylakoid membrane</location>
        <topology evidence="1">Peripheral membrane protein</topology>
        <orientation evidence="1">Cytoplasmic side</orientation>
    </subcellularLocation>
</comment>
<comment type="similarity">
    <text evidence="1">Belongs to the complex I NdhN subunit family.</text>
</comment>
<keyword id="KW-0472">Membrane</keyword>
<keyword id="KW-0520">NAD</keyword>
<keyword id="KW-0521">NADP</keyword>
<keyword id="KW-0618">Plastoquinone</keyword>
<keyword id="KW-0874">Quinone</keyword>
<keyword id="KW-1185">Reference proteome</keyword>
<keyword id="KW-0793">Thylakoid</keyword>
<keyword id="KW-1278">Translocase</keyword>
<keyword id="KW-0813">Transport</keyword>
<dbReference type="EC" id="7.1.1.-" evidence="1"/>
<dbReference type="EMBL" id="CP001291">
    <property type="protein sequence ID" value="ACK73263.1"/>
    <property type="molecule type" value="Genomic_DNA"/>
</dbReference>
<dbReference type="RefSeq" id="WP_015956845.1">
    <property type="nucleotide sequence ID" value="NC_011729.1"/>
</dbReference>
<dbReference type="SMR" id="B7KEE5"/>
<dbReference type="STRING" id="65393.PCC7424_4906"/>
<dbReference type="KEGG" id="cyc:PCC7424_4906"/>
<dbReference type="eggNOG" id="ENOG502ZBMI">
    <property type="taxonomic scope" value="Bacteria"/>
</dbReference>
<dbReference type="HOGENOM" id="CLU_087432_0_0_3"/>
<dbReference type="OrthoDB" id="510798at2"/>
<dbReference type="Proteomes" id="UP000002384">
    <property type="component" value="Chromosome"/>
</dbReference>
<dbReference type="GO" id="GO:0031676">
    <property type="term" value="C:plasma membrane-derived thylakoid membrane"/>
    <property type="evidence" value="ECO:0007669"/>
    <property type="project" value="UniProtKB-SubCell"/>
</dbReference>
<dbReference type="GO" id="GO:0016655">
    <property type="term" value="F:oxidoreductase activity, acting on NAD(P)H, quinone or similar compound as acceptor"/>
    <property type="evidence" value="ECO:0007669"/>
    <property type="project" value="UniProtKB-UniRule"/>
</dbReference>
<dbReference type="GO" id="GO:0048038">
    <property type="term" value="F:quinone binding"/>
    <property type="evidence" value="ECO:0007669"/>
    <property type="project" value="UniProtKB-KW"/>
</dbReference>
<dbReference type="HAMAP" id="MF_01353">
    <property type="entry name" value="NDH1_NDH1N"/>
    <property type="match status" value="1"/>
</dbReference>
<dbReference type="InterPro" id="IPR020874">
    <property type="entry name" value="NAD(P)H-quinone_OxRdtase_su_N"/>
</dbReference>
<dbReference type="PANTHER" id="PTHR35515">
    <property type="entry name" value="NAD(P)H-QUINONE OXIDOREDUCTASE SUBUNIT N, CHLOROPLASTIC"/>
    <property type="match status" value="1"/>
</dbReference>
<dbReference type="PANTHER" id="PTHR35515:SF1">
    <property type="entry name" value="NAD(P)H-QUINONE OXIDOREDUCTASE SUBUNIT N, CHLOROPLASTIC"/>
    <property type="match status" value="1"/>
</dbReference>
<dbReference type="Pfam" id="PF11909">
    <property type="entry name" value="NdhN"/>
    <property type="match status" value="1"/>
</dbReference>
<evidence type="ECO:0000255" key="1">
    <source>
        <dbReference type="HAMAP-Rule" id="MF_01353"/>
    </source>
</evidence>
<organism>
    <name type="scientific">Gloeothece citriformis (strain PCC 7424)</name>
    <name type="common">Cyanothece sp. (strain PCC 7424)</name>
    <dbReference type="NCBI Taxonomy" id="65393"/>
    <lineage>
        <taxon>Bacteria</taxon>
        <taxon>Bacillati</taxon>
        <taxon>Cyanobacteriota</taxon>
        <taxon>Cyanophyceae</taxon>
        <taxon>Oscillatoriophycideae</taxon>
        <taxon>Chroococcales</taxon>
        <taxon>Aphanothecaceae</taxon>
        <taxon>Gloeothece</taxon>
        <taxon>Gloeothece citriformis</taxon>
    </lineage>
</organism>